<dbReference type="EC" id="2.1.1.-"/>
<dbReference type="EMBL" id="CP000325">
    <property type="protein sequence ID" value="ABL04739.1"/>
    <property type="molecule type" value="Genomic_DNA"/>
</dbReference>
<dbReference type="RefSeq" id="WP_011740355.1">
    <property type="nucleotide sequence ID" value="NC_008611.1"/>
</dbReference>
<dbReference type="SMR" id="A0PQX0"/>
<dbReference type="KEGG" id="mul:MUL_2377"/>
<dbReference type="eggNOG" id="COG2226">
    <property type="taxonomic scope" value="Bacteria"/>
</dbReference>
<dbReference type="HOGENOM" id="CLU_068661_0_0_11"/>
<dbReference type="Proteomes" id="UP000000765">
    <property type="component" value="Chromosome"/>
</dbReference>
<dbReference type="GO" id="GO:0008757">
    <property type="term" value="F:S-adenosylmethionine-dependent methyltransferase activity"/>
    <property type="evidence" value="ECO:0007669"/>
    <property type="project" value="InterPro"/>
</dbReference>
<dbReference type="GO" id="GO:0006629">
    <property type="term" value="P:lipid metabolic process"/>
    <property type="evidence" value="ECO:0007669"/>
    <property type="project" value="UniProtKB-KW"/>
</dbReference>
<dbReference type="GO" id="GO:0032259">
    <property type="term" value="P:methylation"/>
    <property type="evidence" value="ECO:0007669"/>
    <property type="project" value="UniProtKB-KW"/>
</dbReference>
<dbReference type="CDD" id="cd02440">
    <property type="entry name" value="AdoMet_MTases"/>
    <property type="match status" value="1"/>
</dbReference>
<dbReference type="Gene3D" id="3.40.50.150">
    <property type="entry name" value="Vaccinia Virus protein VP39"/>
    <property type="match status" value="1"/>
</dbReference>
<dbReference type="InterPro" id="IPR013216">
    <property type="entry name" value="Methyltransf_11"/>
</dbReference>
<dbReference type="InterPro" id="IPR054877">
    <property type="entry name" value="PthPhpthDimycoMt"/>
</dbReference>
<dbReference type="InterPro" id="IPR029063">
    <property type="entry name" value="SAM-dependent_MTases_sf"/>
</dbReference>
<dbReference type="NCBIfam" id="NF045823">
    <property type="entry name" value="PthPhpthDimycoMt"/>
    <property type="match status" value="1"/>
</dbReference>
<dbReference type="PANTHER" id="PTHR43591:SF24">
    <property type="entry name" value="2-METHOXY-6-POLYPRENYL-1,4-BENZOQUINOL METHYLASE, MITOCHONDRIAL"/>
    <property type="match status" value="1"/>
</dbReference>
<dbReference type="PANTHER" id="PTHR43591">
    <property type="entry name" value="METHYLTRANSFERASE"/>
    <property type="match status" value="1"/>
</dbReference>
<dbReference type="Pfam" id="PF08241">
    <property type="entry name" value="Methyltransf_11"/>
    <property type="match status" value="1"/>
</dbReference>
<dbReference type="SUPFAM" id="SSF53335">
    <property type="entry name" value="S-adenosyl-L-methionine-dependent methyltransferases"/>
    <property type="match status" value="1"/>
</dbReference>
<proteinExistence type="inferred from homology"/>
<name>PHMT1_MYCUA</name>
<comment type="function">
    <text evidence="1">Catalyzes the methylation of the lipid moiety of the intermediate compounds phthiotriol and glycosylated phenolphthiotriol dimycoserosates to form phthiocerol dimycocerosates (DIM A) and glycosylated phenolphthiocerol dimycocerosates (PGL).</text>
</comment>
<comment type="similarity">
    <text evidence="2">Belongs to the methyltransferase superfamily. Phthiotriol/phenolphthiotriol dimycocerosates methyltransferase family.</text>
</comment>
<protein>
    <recommendedName>
        <fullName>Phthiotriol/phenolphthiotriol dimycocerosates methyltransferase 1</fullName>
        <ecNumber>2.1.1.-</ecNumber>
    </recommendedName>
</protein>
<accession>A0PQX0</accession>
<evidence type="ECO:0000250" key="1"/>
<evidence type="ECO:0000305" key="2"/>
<feature type="chain" id="PRO_0000305167" description="Phthiotriol/phenolphthiotriol dimycocerosates methyltransferase 1">
    <location>
        <begin position="1"/>
        <end position="271"/>
    </location>
</feature>
<organism>
    <name type="scientific">Mycobacterium ulcerans (strain Agy99)</name>
    <dbReference type="NCBI Taxonomy" id="362242"/>
    <lineage>
        <taxon>Bacteria</taxon>
        <taxon>Bacillati</taxon>
        <taxon>Actinomycetota</taxon>
        <taxon>Actinomycetes</taxon>
        <taxon>Mycobacteriales</taxon>
        <taxon>Mycobacteriaceae</taxon>
        <taxon>Mycobacterium</taxon>
        <taxon>Mycobacterium ulcerans group</taxon>
    </lineage>
</organism>
<sequence length="271" mass="30917">MAFSPAHRLLARLGSTSIYKRVWRYWYPLMTRGLGADKIAFLNWAYEEDPPIDLTLEVSDEPNRDHINMYHRTATHVELSGKRVLEVSCGHGGGASYLTRTLHPASYTGLDLNRAGIKLCQRRHNLPGLDFVRGDAENLPFEDESFDVVLKVEASHCYPHFSRFLAEVVRVLRPGGYLLYTDLRPSNEIAEWEADLAGSPLRQLSQREINAEVVRGIEKNSHTSRVLVDRNLPAFLRFADRAVGRQLSRYLEGGELSYRMYCFTKDFAASR</sequence>
<reference key="1">
    <citation type="journal article" date="2007" name="Genome Res.">
        <title>Reductive evolution and niche adaptation inferred from the genome of Mycobacterium ulcerans, the causative agent of Buruli ulcer.</title>
        <authorList>
            <person name="Stinear T.P."/>
            <person name="Seemann T."/>
            <person name="Pidot S."/>
            <person name="Frigui W."/>
            <person name="Reysset G."/>
            <person name="Garnier T."/>
            <person name="Meurice G."/>
            <person name="Simon D."/>
            <person name="Bouchier C."/>
            <person name="Ma L."/>
            <person name="Tichit M."/>
            <person name="Porter J.L."/>
            <person name="Ryan J."/>
            <person name="Johnson P.D.R."/>
            <person name="Davies J.K."/>
            <person name="Jenkin G.A."/>
            <person name="Small P.L.C."/>
            <person name="Jones L.M."/>
            <person name="Tekaia F."/>
            <person name="Laval F."/>
            <person name="Daffe M."/>
            <person name="Parkhill J."/>
            <person name="Cole S.T."/>
        </authorList>
    </citation>
    <scope>NUCLEOTIDE SEQUENCE [LARGE SCALE GENOMIC DNA]</scope>
    <source>
        <strain>Agy99</strain>
    </source>
</reference>
<gene>
    <name type="ordered locus">MUL_2377</name>
</gene>
<keyword id="KW-0444">Lipid biosynthesis</keyword>
<keyword id="KW-0443">Lipid metabolism</keyword>
<keyword id="KW-0489">Methyltransferase</keyword>
<keyword id="KW-0808">Transferase</keyword>